<dbReference type="EC" id="2.7.1.48" evidence="1"/>
<dbReference type="EMBL" id="AJ938182">
    <property type="protein sequence ID" value="CAI81171.1"/>
    <property type="molecule type" value="Genomic_DNA"/>
</dbReference>
<dbReference type="RefSeq" id="WP_000648617.1">
    <property type="nucleotide sequence ID" value="NC_007622.1"/>
</dbReference>
<dbReference type="SMR" id="Q2YT67"/>
<dbReference type="KEGG" id="sab:SAB1482c"/>
<dbReference type="HOGENOM" id="CLU_021278_1_2_9"/>
<dbReference type="UniPathway" id="UPA00574">
    <property type="reaction ID" value="UER00637"/>
</dbReference>
<dbReference type="UniPathway" id="UPA00579">
    <property type="reaction ID" value="UER00640"/>
</dbReference>
<dbReference type="GO" id="GO:0005737">
    <property type="term" value="C:cytoplasm"/>
    <property type="evidence" value="ECO:0007669"/>
    <property type="project" value="UniProtKB-SubCell"/>
</dbReference>
<dbReference type="GO" id="GO:0005524">
    <property type="term" value="F:ATP binding"/>
    <property type="evidence" value="ECO:0007669"/>
    <property type="project" value="UniProtKB-UniRule"/>
</dbReference>
<dbReference type="GO" id="GO:0043771">
    <property type="term" value="F:cytidine kinase activity"/>
    <property type="evidence" value="ECO:0007669"/>
    <property type="project" value="RHEA"/>
</dbReference>
<dbReference type="GO" id="GO:0004849">
    <property type="term" value="F:uridine kinase activity"/>
    <property type="evidence" value="ECO:0007669"/>
    <property type="project" value="UniProtKB-UniRule"/>
</dbReference>
<dbReference type="GO" id="GO:0044211">
    <property type="term" value="P:CTP salvage"/>
    <property type="evidence" value="ECO:0007669"/>
    <property type="project" value="UniProtKB-UniRule"/>
</dbReference>
<dbReference type="GO" id="GO:0044206">
    <property type="term" value="P:UMP salvage"/>
    <property type="evidence" value="ECO:0007669"/>
    <property type="project" value="UniProtKB-UniRule"/>
</dbReference>
<dbReference type="CDD" id="cd02023">
    <property type="entry name" value="UMPK"/>
    <property type="match status" value="1"/>
</dbReference>
<dbReference type="Gene3D" id="3.40.50.300">
    <property type="entry name" value="P-loop containing nucleotide triphosphate hydrolases"/>
    <property type="match status" value="1"/>
</dbReference>
<dbReference type="HAMAP" id="MF_00551">
    <property type="entry name" value="Uridine_kinase"/>
    <property type="match status" value="1"/>
</dbReference>
<dbReference type="InterPro" id="IPR027417">
    <property type="entry name" value="P-loop_NTPase"/>
</dbReference>
<dbReference type="InterPro" id="IPR006083">
    <property type="entry name" value="PRK/URK"/>
</dbReference>
<dbReference type="InterPro" id="IPR026008">
    <property type="entry name" value="Uridine_kinase"/>
</dbReference>
<dbReference type="InterPro" id="IPR000764">
    <property type="entry name" value="Uridine_kinase-like"/>
</dbReference>
<dbReference type="NCBIfam" id="NF004018">
    <property type="entry name" value="PRK05480.1"/>
    <property type="match status" value="1"/>
</dbReference>
<dbReference type="NCBIfam" id="TIGR00235">
    <property type="entry name" value="udk"/>
    <property type="match status" value="1"/>
</dbReference>
<dbReference type="PANTHER" id="PTHR10285">
    <property type="entry name" value="URIDINE KINASE"/>
    <property type="match status" value="1"/>
</dbReference>
<dbReference type="Pfam" id="PF00485">
    <property type="entry name" value="PRK"/>
    <property type="match status" value="1"/>
</dbReference>
<dbReference type="PRINTS" id="PR00988">
    <property type="entry name" value="URIDINKINASE"/>
</dbReference>
<dbReference type="SUPFAM" id="SSF52540">
    <property type="entry name" value="P-loop containing nucleoside triphosphate hydrolases"/>
    <property type="match status" value="1"/>
</dbReference>
<evidence type="ECO:0000255" key="1">
    <source>
        <dbReference type="HAMAP-Rule" id="MF_00551"/>
    </source>
</evidence>
<proteinExistence type="inferred from homology"/>
<sequence>MKATTIIGIAGGSGSGKTTVTNEIMKNLEGHSVALLAQDYYYKDQKHLTFDERLETNYDHPFAFDNDLLIENLKDLKNGKAVEVPTYDYASHTRSDITIDFKPKDVIIVEGIFALENKVLRDMMDVKIYVDTDADLRILRRLTRDTKERGRSMDSVINQYLSVVRPMHDQFIEPTKKYADIIIPEGGSNKVAIDIMTTKIQSLVSKQ</sequence>
<name>URK_STAAB</name>
<feature type="chain" id="PRO_1000017904" description="Uridine kinase">
    <location>
        <begin position="1"/>
        <end position="207"/>
    </location>
</feature>
<feature type="binding site" evidence="1">
    <location>
        <begin position="11"/>
        <end position="18"/>
    </location>
    <ligand>
        <name>ATP</name>
        <dbReference type="ChEBI" id="CHEBI:30616"/>
    </ligand>
</feature>
<gene>
    <name evidence="1" type="primary">udk</name>
    <name type="ordered locus">SAB1482c</name>
</gene>
<reference key="1">
    <citation type="journal article" date="2007" name="PLoS ONE">
        <title>Molecular correlates of host specialization in Staphylococcus aureus.</title>
        <authorList>
            <person name="Herron-Olson L."/>
            <person name="Fitzgerald J.R."/>
            <person name="Musser J.M."/>
            <person name="Kapur V."/>
        </authorList>
    </citation>
    <scope>NUCLEOTIDE SEQUENCE [LARGE SCALE GENOMIC DNA]</scope>
    <source>
        <strain>bovine RF122 / ET3-1</strain>
    </source>
</reference>
<comment type="catalytic activity">
    <reaction evidence="1">
        <text>uridine + ATP = UMP + ADP + H(+)</text>
        <dbReference type="Rhea" id="RHEA:16825"/>
        <dbReference type="ChEBI" id="CHEBI:15378"/>
        <dbReference type="ChEBI" id="CHEBI:16704"/>
        <dbReference type="ChEBI" id="CHEBI:30616"/>
        <dbReference type="ChEBI" id="CHEBI:57865"/>
        <dbReference type="ChEBI" id="CHEBI:456216"/>
        <dbReference type="EC" id="2.7.1.48"/>
    </reaction>
</comment>
<comment type="catalytic activity">
    <reaction evidence="1">
        <text>cytidine + ATP = CMP + ADP + H(+)</text>
        <dbReference type="Rhea" id="RHEA:24674"/>
        <dbReference type="ChEBI" id="CHEBI:15378"/>
        <dbReference type="ChEBI" id="CHEBI:17562"/>
        <dbReference type="ChEBI" id="CHEBI:30616"/>
        <dbReference type="ChEBI" id="CHEBI:60377"/>
        <dbReference type="ChEBI" id="CHEBI:456216"/>
        <dbReference type="EC" id="2.7.1.48"/>
    </reaction>
</comment>
<comment type="pathway">
    <text evidence="1">Pyrimidine metabolism; CTP biosynthesis via salvage pathway; CTP from cytidine: step 1/3.</text>
</comment>
<comment type="pathway">
    <text evidence="1">Pyrimidine metabolism; UMP biosynthesis via salvage pathway; UMP from uridine: step 1/1.</text>
</comment>
<comment type="subcellular location">
    <subcellularLocation>
        <location evidence="1">Cytoplasm</location>
    </subcellularLocation>
</comment>
<comment type="similarity">
    <text evidence="1">Belongs to the uridine kinase family.</text>
</comment>
<protein>
    <recommendedName>
        <fullName evidence="1">Uridine kinase</fullName>
        <ecNumber evidence="1">2.7.1.48</ecNumber>
    </recommendedName>
    <alternativeName>
        <fullName evidence="1">Cytidine monophosphokinase</fullName>
    </alternativeName>
    <alternativeName>
        <fullName evidence="1">Uridine monophosphokinase</fullName>
    </alternativeName>
</protein>
<organism>
    <name type="scientific">Staphylococcus aureus (strain bovine RF122 / ET3-1)</name>
    <dbReference type="NCBI Taxonomy" id="273036"/>
    <lineage>
        <taxon>Bacteria</taxon>
        <taxon>Bacillati</taxon>
        <taxon>Bacillota</taxon>
        <taxon>Bacilli</taxon>
        <taxon>Bacillales</taxon>
        <taxon>Staphylococcaceae</taxon>
        <taxon>Staphylococcus</taxon>
    </lineage>
</organism>
<accession>Q2YT67</accession>
<keyword id="KW-0067">ATP-binding</keyword>
<keyword id="KW-0963">Cytoplasm</keyword>
<keyword id="KW-0418">Kinase</keyword>
<keyword id="KW-0547">Nucleotide-binding</keyword>
<keyword id="KW-0808">Transferase</keyword>